<protein>
    <recommendedName>
        <fullName evidence="6">Ornithine transcarbamylase, mitochondrial</fullName>
        <shortName evidence="4">OTCase</shortName>
        <ecNumber evidence="2">2.1.3.3</ecNumber>
    </recommendedName>
    <alternativeName>
        <fullName>Ornithine carbamoyltransferase, mitochondrial</fullName>
    </alternativeName>
</protein>
<reference key="1">
    <citation type="journal article" date="1997" name="J. Anim. Sci.">
        <title>Nucleotide sequence of porcine OTCase cDNA.</title>
        <authorList>
            <person name="Koger J.B."/>
            <person name="Jones E.E."/>
        </authorList>
    </citation>
    <scope>NUCLEOTIDE SEQUENCE [MRNA]</scope>
    <source>
        <tissue>Liver</tissue>
    </source>
</reference>
<comment type="function">
    <text evidence="2">Catalyzes the second step of the urea cycle, the condensation of carbamoyl phosphate with L-ornithine to form L-citrulline. The urea cycle ensures the detoxification of ammonia by converting it to urea for excretion.</text>
</comment>
<comment type="catalytic activity">
    <reaction evidence="2">
        <text>carbamoyl phosphate + L-ornithine = L-citrulline + phosphate + H(+)</text>
        <dbReference type="Rhea" id="RHEA:19513"/>
        <dbReference type="ChEBI" id="CHEBI:15378"/>
        <dbReference type="ChEBI" id="CHEBI:43474"/>
        <dbReference type="ChEBI" id="CHEBI:46911"/>
        <dbReference type="ChEBI" id="CHEBI:57743"/>
        <dbReference type="ChEBI" id="CHEBI:58228"/>
        <dbReference type="EC" id="2.1.3.3"/>
    </reaction>
    <physiologicalReaction direction="right-to-left" evidence="2">
        <dbReference type="Rhea" id="RHEA:19515"/>
    </physiologicalReaction>
</comment>
<comment type="activity regulation">
    <text evidence="2">Negatively regulated by lysine acetylation.</text>
</comment>
<comment type="pathway">
    <text evidence="2">Nitrogen metabolism; urea cycle; L-citrulline from L-ornithine and carbamoyl phosphate: step 1/1.</text>
</comment>
<comment type="subunit">
    <text evidence="2">Homotrimer.</text>
</comment>
<comment type="subcellular location">
    <subcellularLocation>
        <location evidence="2">Mitochondrion matrix</location>
    </subcellularLocation>
</comment>
<comment type="PTM">
    <text evidence="2">Acetylation at Lys-62 negatively regulates ornithine carbamoyltransferase activity in response to nutrient signals.</text>
</comment>
<comment type="similarity">
    <text evidence="5">Belongs to the aspartate/ornithine carbamoyltransferase superfamily. OTCase family.</text>
</comment>
<proteinExistence type="evidence at transcript level"/>
<gene>
    <name evidence="2" type="primary">OTC</name>
</gene>
<organism>
    <name type="scientific">Sus scrofa</name>
    <name type="common">Pig</name>
    <dbReference type="NCBI Taxonomy" id="9823"/>
    <lineage>
        <taxon>Eukaryota</taxon>
        <taxon>Metazoa</taxon>
        <taxon>Chordata</taxon>
        <taxon>Craniata</taxon>
        <taxon>Vertebrata</taxon>
        <taxon>Euteleostomi</taxon>
        <taxon>Mammalia</taxon>
        <taxon>Eutheria</taxon>
        <taxon>Laurasiatheria</taxon>
        <taxon>Artiodactyla</taxon>
        <taxon>Suina</taxon>
        <taxon>Suidae</taxon>
        <taxon>Sus</taxon>
    </lineage>
</organism>
<feature type="transit peptide" description="Mitochondrion" evidence="2">
    <location>
        <begin position="1" status="less than"/>
        <end position="6"/>
    </location>
</feature>
<feature type="chain" id="PRO_0000020336" description="Ornithine transcarbamylase, mitochondrial">
    <location>
        <begin position="7"/>
        <end position="328"/>
    </location>
</feature>
<feature type="active site" evidence="1">
    <location>
        <position position="277"/>
    </location>
</feature>
<feature type="binding site" evidence="1">
    <location>
        <begin position="64"/>
        <end position="68"/>
    </location>
    <ligand>
        <name>carbamoyl phosphate</name>
        <dbReference type="ChEBI" id="CHEBI:58228"/>
    </ligand>
</feature>
<feature type="binding site" evidence="1">
    <location>
        <position position="115"/>
    </location>
    <ligand>
        <name>carbamoyl phosphate</name>
        <dbReference type="ChEBI" id="CHEBI:58228"/>
    </ligand>
</feature>
<feature type="binding site" evidence="1">
    <location>
        <position position="115"/>
    </location>
    <ligand>
        <name>L-ornithine</name>
        <dbReference type="ChEBI" id="CHEBI:46911"/>
    </ligand>
</feature>
<feature type="binding site" evidence="1">
    <location>
        <position position="142"/>
    </location>
    <ligand>
        <name>carbamoyl phosphate</name>
        <dbReference type="ChEBI" id="CHEBI:58228"/>
    </ligand>
</feature>
<feature type="binding site" evidence="1">
    <location>
        <position position="173"/>
    </location>
    <ligand>
        <name>L-ornithine</name>
        <dbReference type="ChEBI" id="CHEBI:46911"/>
    </ligand>
</feature>
<feature type="binding site" evidence="1">
    <location>
        <begin position="237"/>
        <end position="241"/>
    </location>
    <ligand>
        <name>L-ornithine</name>
        <dbReference type="ChEBI" id="CHEBI:46911"/>
    </ligand>
</feature>
<feature type="binding site" evidence="1">
    <location>
        <begin position="276"/>
        <end position="279"/>
    </location>
    <ligand>
        <name>L-ornithine</name>
        <dbReference type="ChEBI" id="CHEBI:46911"/>
    </ligand>
</feature>
<feature type="binding site" evidence="1">
    <location>
        <position position="304"/>
    </location>
    <ligand>
        <name>carbamoyl phosphate</name>
        <dbReference type="ChEBI" id="CHEBI:58228"/>
    </ligand>
</feature>
<feature type="binding site" evidence="1">
    <location>
        <position position="304"/>
    </location>
    <ligand>
        <name>L-ornithine</name>
        <dbReference type="ChEBI" id="CHEBI:46911"/>
    </ligand>
</feature>
<feature type="modified residue" description="N6-acetyllysine; alternate" evidence="3">
    <location>
        <position position="44"/>
    </location>
</feature>
<feature type="modified residue" description="N6-succinyllysine; alternate" evidence="3">
    <location>
        <position position="44"/>
    </location>
</feature>
<feature type="modified residue" description="N6-succinyllysine" evidence="3">
    <location>
        <position position="54"/>
    </location>
</feature>
<feature type="modified residue" description="N6-acetyllysine; alternate" evidence="2">
    <location>
        <position position="62"/>
    </location>
</feature>
<feature type="modified residue" description="N6-succinyllysine; alternate" evidence="3">
    <location>
        <position position="62"/>
    </location>
</feature>
<feature type="modified residue" description="Phosphoserine" evidence="2">
    <location>
        <position position="107"/>
    </location>
</feature>
<feature type="modified residue" description="N6-acetyllysine; alternate" evidence="3">
    <location>
        <position position="118"/>
    </location>
</feature>
<feature type="modified residue" description="N6-succinyllysine; alternate" evidence="3">
    <location>
        <position position="118"/>
    </location>
</feature>
<feature type="modified residue" description="N6-acetyllysine; alternate" evidence="3">
    <location>
        <position position="195"/>
    </location>
</feature>
<feature type="modified residue" description="N6-succinyllysine; alternate" evidence="3">
    <location>
        <position position="195"/>
    </location>
</feature>
<feature type="modified residue" description="N6-acetyllysine; alternate" evidence="3">
    <location>
        <position position="205"/>
    </location>
</feature>
<feature type="modified residue" description="N6-succinyllysine; alternate" evidence="3">
    <location>
        <position position="205"/>
    </location>
</feature>
<feature type="modified residue" description="N6-acetyllysine; alternate" evidence="3">
    <location>
        <position position="212"/>
    </location>
</feature>
<feature type="modified residue" description="N6-succinyllysine; alternate" evidence="3">
    <location>
        <position position="212"/>
    </location>
</feature>
<feature type="modified residue" description="N6-succinyllysine" evidence="3">
    <location>
        <position position="248"/>
    </location>
</feature>
<feature type="modified residue" description="N6-succinyllysine" evidence="3">
    <location>
        <position position="263"/>
    </location>
</feature>
<feature type="modified residue" description="N6-acetyllysine; alternate" evidence="3">
    <location>
        <position position="281"/>
    </location>
</feature>
<feature type="modified residue" description="N6-succinyllysine; alternate" evidence="3">
    <location>
        <position position="281"/>
    </location>
</feature>
<feature type="non-terminal residue">
    <location>
        <position position="1"/>
    </location>
</feature>
<accession>O19072</accession>
<name>OTC_PIG</name>
<keyword id="KW-0007">Acetylation</keyword>
<keyword id="KW-0028">Amino-acid biosynthesis</keyword>
<keyword id="KW-0055">Arginine biosynthesis</keyword>
<keyword id="KW-0496">Mitochondrion</keyword>
<keyword id="KW-0597">Phosphoprotein</keyword>
<keyword id="KW-1185">Reference proteome</keyword>
<keyword id="KW-0808">Transferase</keyword>
<keyword id="KW-0809">Transit peptide</keyword>
<keyword id="KW-0835">Urea cycle</keyword>
<evidence type="ECO:0000250" key="1"/>
<evidence type="ECO:0000250" key="2">
    <source>
        <dbReference type="UniProtKB" id="P00480"/>
    </source>
</evidence>
<evidence type="ECO:0000250" key="3">
    <source>
        <dbReference type="UniProtKB" id="P11725"/>
    </source>
</evidence>
<evidence type="ECO:0000303" key="4">
    <source>
    </source>
</evidence>
<evidence type="ECO:0000305" key="5"/>
<evidence type="ECO:0000305" key="6">
    <source>
    </source>
</evidence>
<sequence>GGQPLQNKVQLKGRDLLTLKNFTGEEIKYILWLSADLKFRIKQKGEYLPLLQGKSLGMIFEKRSTRTRLSTETGFALLGGHPCFLTTQDIHLGVNESLKDTARVLSSMTDAVLARVYKQSDLDILAQEASIPIINGLSDLYHPIQILADYLTLQEHYGALKGLTLSWIGDGNNILHSIMMSAAKFGMHLQVATPKGYEPDPSITKLAEQYAKENGTNVSLTNDPLEAARGGNVLITDTWISMGQEEEKKKRLQAFQGYQVTMKTAEVAASDWTFLHCLPRKPEEVDDEVFYSPQSLVFPEAENRKWTIMAVMVSLLTDYSPQLQKPKF</sequence>
<dbReference type="EC" id="2.1.3.3" evidence="2"/>
<dbReference type="EMBL" id="Y13045">
    <property type="protein sequence ID" value="CAA73480.1"/>
    <property type="molecule type" value="mRNA"/>
</dbReference>
<dbReference type="SMR" id="O19072"/>
<dbReference type="FunCoup" id="O19072">
    <property type="interactions" value="123"/>
</dbReference>
<dbReference type="STRING" id="9823.ENSSSCP00000072423"/>
<dbReference type="PaxDb" id="9823-ENSSSCP00000013022"/>
<dbReference type="PeptideAtlas" id="O19072"/>
<dbReference type="eggNOG" id="KOG1504">
    <property type="taxonomic scope" value="Eukaryota"/>
</dbReference>
<dbReference type="InParanoid" id="O19072"/>
<dbReference type="SABIO-RK" id="O19072"/>
<dbReference type="UniPathway" id="UPA00158">
    <property type="reaction ID" value="UER00271"/>
</dbReference>
<dbReference type="Proteomes" id="UP000008227">
    <property type="component" value="Unplaced"/>
</dbReference>
<dbReference type="Proteomes" id="UP000314985">
    <property type="component" value="Unplaced"/>
</dbReference>
<dbReference type="Proteomes" id="UP000694570">
    <property type="component" value="Unplaced"/>
</dbReference>
<dbReference type="Proteomes" id="UP000694571">
    <property type="component" value="Unplaced"/>
</dbReference>
<dbReference type="Proteomes" id="UP000694720">
    <property type="component" value="Unplaced"/>
</dbReference>
<dbReference type="Proteomes" id="UP000694722">
    <property type="component" value="Unplaced"/>
</dbReference>
<dbReference type="Proteomes" id="UP000694723">
    <property type="component" value="Unplaced"/>
</dbReference>
<dbReference type="Proteomes" id="UP000694724">
    <property type="component" value="Unplaced"/>
</dbReference>
<dbReference type="Proteomes" id="UP000694725">
    <property type="component" value="Unplaced"/>
</dbReference>
<dbReference type="Proteomes" id="UP000694726">
    <property type="component" value="Unplaced"/>
</dbReference>
<dbReference type="Proteomes" id="UP000694727">
    <property type="component" value="Unplaced"/>
</dbReference>
<dbReference type="Proteomes" id="UP000694728">
    <property type="component" value="Unplaced"/>
</dbReference>
<dbReference type="GO" id="GO:0005743">
    <property type="term" value="C:mitochondrial inner membrane"/>
    <property type="evidence" value="ECO:0000250"/>
    <property type="project" value="AgBase"/>
</dbReference>
<dbReference type="GO" id="GO:0005759">
    <property type="term" value="C:mitochondrial matrix"/>
    <property type="evidence" value="ECO:0007669"/>
    <property type="project" value="UniProtKB-SubCell"/>
</dbReference>
<dbReference type="GO" id="GO:0005739">
    <property type="term" value="C:mitochondrion"/>
    <property type="evidence" value="ECO:0000250"/>
    <property type="project" value="AgBase"/>
</dbReference>
<dbReference type="GO" id="GO:0016597">
    <property type="term" value="F:amino acid binding"/>
    <property type="evidence" value="ECO:0007669"/>
    <property type="project" value="InterPro"/>
</dbReference>
<dbReference type="GO" id="GO:0004585">
    <property type="term" value="F:ornithine carbamoyltransferase activity"/>
    <property type="evidence" value="ECO:0000318"/>
    <property type="project" value="GO_Central"/>
</dbReference>
<dbReference type="GO" id="GO:0042450">
    <property type="term" value="P:arginine biosynthetic process via ornithine"/>
    <property type="evidence" value="ECO:0000318"/>
    <property type="project" value="GO_Central"/>
</dbReference>
<dbReference type="GO" id="GO:0019240">
    <property type="term" value="P:citrulline biosynthetic process"/>
    <property type="evidence" value="ECO:0000318"/>
    <property type="project" value="GO_Central"/>
</dbReference>
<dbReference type="GO" id="GO:0006526">
    <property type="term" value="P:L-arginine biosynthetic process"/>
    <property type="evidence" value="ECO:0007669"/>
    <property type="project" value="UniProtKB-KW"/>
</dbReference>
<dbReference type="GO" id="GO:0000050">
    <property type="term" value="P:urea cycle"/>
    <property type="evidence" value="ECO:0007669"/>
    <property type="project" value="UniProtKB-UniPathway"/>
</dbReference>
<dbReference type="FunFam" id="3.40.50.1370:FF:000009">
    <property type="entry name" value="Ornithine carbamoyltransferase, mitochondrial"/>
    <property type="match status" value="1"/>
</dbReference>
<dbReference type="FunFam" id="3.40.50.1370:FF:000010">
    <property type="entry name" value="Ornithine carbamoyltransferase, mitochondrial"/>
    <property type="match status" value="1"/>
</dbReference>
<dbReference type="Gene3D" id="3.40.50.1370">
    <property type="entry name" value="Aspartate/ornithine carbamoyltransferase"/>
    <property type="match status" value="2"/>
</dbReference>
<dbReference type="InterPro" id="IPR006132">
    <property type="entry name" value="Asp/Orn_carbamoyltranf_P-bd"/>
</dbReference>
<dbReference type="InterPro" id="IPR006130">
    <property type="entry name" value="Asp/Orn_carbamoylTrfase"/>
</dbReference>
<dbReference type="InterPro" id="IPR036901">
    <property type="entry name" value="Asp/Orn_carbamoylTrfase_sf"/>
</dbReference>
<dbReference type="InterPro" id="IPR006131">
    <property type="entry name" value="Asp_carbamoyltransf_Asp/Orn-bd"/>
</dbReference>
<dbReference type="InterPro" id="IPR002292">
    <property type="entry name" value="Orn/put_carbamltrans"/>
</dbReference>
<dbReference type="NCBIfam" id="TIGR00658">
    <property type="entry name" value="orni_carb_tr"/>
    <property type="match status" value="1"/>
</dbReference>
<dbReference type="NCBIfam" id="NF001986">
    <property type="entry name" value="PRK00779.1"/>
    <property type="match status" value="1"/>
</dbReference>
<dbReference type="PANTHER" id="PTHR45753">
    <property type="entry name" value="ORNITHINE CARBAMOYLTRANSFERASE, MITOCHONDRIAL"/>
    <property type="match status" value="1"/>
</dbReference>
<dbReference type="PANTHER" id="PTHR45753:SF3">
    <property type="entry name" value="ORNITHINE TRANSCARBAMYLASE, MITOCHONDRIAL"/>
    <property type="match status" value="1"/>
</dbReference>
<dbReference type="Pfam" id="PF00185">
    <property type="entry name" value="OTCace"/>
    <property type="match status" value="1"/>
</dbReference>
<dbReference type="Pfam" id="PF02729">
    <property type="entry name" value="OTCace_N"/>
    <property type="match status" value="1"/>
</dbReference>
<dbReference type="PRINTS" id="PR00100">
    <property type="entry name" value="AOTCASE"/>
</dbReference>
<dbReference type="PRINTS" id="PR00102">
    <property type="entry name" value="OTCASE"/>
</dbReference>
<dbReference type="SUPFAM" id="SSF53671">
    <property type="entry name" value="Aspartate/ornithine carbamoyltransferase"/>
    <property type="match status" value="1"/>
</dbReference>
<dbReference type="PROSITE" id="PS00097">
    <property type="entry name" value="CARBAMOYLTRANSFERASE"/>
    <property type="match status" value="1"/>
</dbReference>